<dbReference type="EC" id="2.8.1.9" evidence="1"/>
<dbReference type="EMBL" id="AAAB01008846">
    <property type="protein sequence ID" value="EAA06295.5"/>
    <property type="molecule type" value="Genomic_DNA"/>
</dbReference>
<dbReference type="RefSeq" id="XP_310528.5">
    <property type="nucleotide sequence ID" value="XM_310528.5"/>
</dbReference>
<dbReference type="SMR" id="Q7QFL7"/>
<dbReference type="FunCoup" id="Q7QFL7">
    <property type="interactions" value="152"/>
</dbReference>
<dbReference type="STRING" id="7165.Q7QFL7"/>
<dbReference type="PaxDb" id="7165-AGAP000555-PA"/>
<dbReference type="EnsemblMetazoa" id="AGAP000555-RA">
    <property type="protein sequence ID" value="AGAP000555-PA"/>
    <property type="gene ID" value="AGAP000555"/>
</dbReference>
<dbReference type="GeneID" id="1271669"/>
<dbReference type="KEGG" id="aga:1271669"/>
<dbReference type="CTD" id="4118"/>
<dbReference type="VEuPathDB" id="VectorBase:AGAMI1_012937"/>
<dbReference type="VEuPathDB" id="VectorBase:AGAP000555"/>
<dbReference type="eggNOG" id="KOG2142">
    <property type="taxonomic scope" value="Eukaryota"/>
</dbReference>
<dbReference type="HOGENOM" id="CLU_010913_0_1_1"/>
<dbReference type="InParanoid" id="Q7QFL7"/>
<dbReference type="OMA" id="PCTRCQM"/>
<dbReference type="PhylomeDB" id="Q7QFL7"/>
<dbReference type="Proteomes" id="UP000007062">
    <property type="component" value="Chromosome X"/>
</dbReference>
<dbReference type="GO" id="GO:0016829">
    <property type="term" value="F:lyase activity"/>
    <property type="evidence" value="ECO:0007669"/>
    <property type="project" value="UniProtKB-UniRule"/>
</dbReference>
<dbReference type="GO" id="GO:0008265">
    <property type="term" value="F:molybdenum cofactor sulfurtransferase activity"/>
    <property type="evidence" value="ECO:0000250"/>
    <property type="project" value="UniProtKB"/>
</dbReference>
<dbReference type="GO" id="GO:0030151">
    <property type="term" value="F:molybdenum ion binding"/>
    <property type="evidence" value="ECO:0007669"/>
    <property type="project" value="UniProtKB-UniRule"/>
</dbReference>
<dbReference type="GO" id="GO:0030170">
    <property type="term" value="F:pyridoxal phosphate binding"/>
    <property type="evidence" value="ECO:0007669"/>
    <property type="project" value="UniProtKB-UniRule"/>
</dbReference>
<dbReference type="GO" id="GO:0006777">
    <property type="term" value="P:Mo-molybdopterin cofactor biosynthetic process"/>
    <property type="evidence" value="ECO:0007669"/>
    <property type="project" value="UniProtKB-UniRule"/>
</dbReference>
<dbReference type="GO" id="GO:0043545">
    <property type="term" value="P:molybdopterin cofactor metabolic process"/>
    <property type="evidence" value="ECO:0000250"/>
    <property type="project" value="UniProtKB"/>
</dbReference>
<dbReference type="FunFam" id="3.40.640.10:FF:000119">
    <property type="entry name" value="Molybdenum cofactor sulfurase"/>
    <property type="match status" value="1"/>
</dbReference>
<dbReference type="FunFam" id="3.90.1150.10:FF:000079">
    <property type="entry name" value="Molybdenum cofactor sulfurase"/>
    <property type="match status" value="1"/>
</dbReference>
<dbReference type="Gene3D" id="3.90.1150.10">
    <property type="entry name" value="Aspartate Aminotransferase, domain 1"/>
    <property type="match status" value="1"/>
</dbReference>
<dbReference type="Gene3D" id="3.40.640.10">
    <property type="entry name" value="Type I PLP-dependent aspartate aminotransferase-like (Major domain)"/>
    <property type="match status" value="1"/>
</dbReference>
<dbReference type="HAMAP" id="MF_03050">
    <property type="entry name" value="MOCOS"/>
    <property type="match status" value="1"/>
</dbReference>
<dbReference type="InterPro" id="IPR000192">
    <property type="entry name" value="Aminotrans_V_dom"/>
</dbReference>
<dbReference type="InterPro" id="IPR005302">
    <property type="entry name" value="MoCF_Sase_C"/>
</dbReference>
<dbReference type="InterPro" id="IPR028886">
    <property type="entry name" value="MoCo_sulfurase"/>
</dbReference>
<dbReference type="InterPro" id="IPR005303">
    <property type="entry name" value="MOCOS_middle"/>
</dbReference>
<dbReference type="InterPro" id="IPR015424">
    <property type="entry name" value="PyrdxlP-dep_Trfase"/>
</dbReference>
<dbReference type="InterPro" id="IPR015421">
    <property type="entry name" value="PyrdxlP-dep_Trfase_major"/>
</dbReference>
<dbReference type="InterPro" id="IPR015422">
    <property type="entry name" value="PyrdxlP-dep_Trfase_small"/>
</dbReference>
<dbReference type="InterPro" id="IPR011037">
    <property type="entry name" value="Pyrv_Knase-like_insert_dom_sf"/>
</dbReference>
<dbReference type="PANTHER" id="PTHR14237:SF19">
    <property type="entry name" value="MITOCHONDRIAL AMIDOXIME REDUCING COMPONENT 1"/>
    <property type="match status" value="1"/>
</dbReference>
<dbReference type="PANTHER" id="PTHR14237">
    <property type="entry name" value="MOLYBDOPTERIN COFACTOR SULFURASE MOSC"/>
    <property type="match status" value="1"/>
</dbReference>
<dbReference type="Pfam" id="PF00266">
    <property type="entry name" value="Aminotran_5"/>
    <property type="match status" value="1"/>
</dbReference>
<dbReference type="Pfam" id="PF03473">
    <property type="entry name" value="MOSC"/>
    <property type="match status" value="1"/>
</dbReference>
<dbReference type="Pfam" id="PF03476">
    <property type="entry name" value="MOSC_N"/>
    <property type="match status" value="1"/>
</dbReference>
<dbReference type="SUPFAM" id="SSF141673">
    <property type="entry name" value="MOSC N-terminal domain-like"/>
    <property type="match status" value="1"/>
</dbReference>
<dbReference type="SUPFAM" id="SSF50800">
    <property type="entry name" value="PK beta-barrel domain-like"/>
    <property type="match status" value="1"/>
</dbReference>
<dbReference type="SUPFAM" id="SSF53383">
    <property type="entry name" value="PLP-dependent transferases"/>
    <property type="match status" value="1"/>
</dbReference>
<dbReference type="PROSITE" id="PS51340">
    <property type="entry name" value="MOSC"/>
    <property type="match status" value="1"/>
</dbReference>
<reference key="1">
    <citation type="journal article" date="2002" name="Science">
        <title>The genome sequence of the malaria mosquito Anopheles gambiae.</title>
        <authorList>
            <person name="Holt R.A."/>
            <person name="Subramanian G.M."/>
            <person name="Halpern A."/>
            <person name="Sutton G.G."/>
            <person name="Charlab R."/>
            <person name="Nusskern D.R."/>
            <person name="Wincker P."/>
            <person name="Clark A.G."/>
            <person name="Ribeiro J.M.C."/>
            <person name="Wides R."/>
            <person name="Salzberg S.L."/>
            <person name="Loftus B.J."/>
            <person name="Yandell M.D."/>
            <person name="Majoros W.H."/>
            <person name="Rusch D.B."/>
            <person name="Lai Z."/>
            <person name="Kraft C.L."/>
            <person name="Abril J.F."/>
            <person name="Anthouard V."/>
            <person name="Arensburger P."/>
            <person name="Atkinson P.W."/>
            <person name="Baden H."/>
            <person name="de Berardinis V."/>
            <person name="Baldwin D."/>
            <person name="Benes V."/>
            <person name="Biedler J."/>
            <person name="Blass C."/>
            <person name="Bolanos R."/>
            <person name="Boscus D."/>
            <person name="Barnstead M."/>
            <person name="Cai S."/>
            <person name="Center A."/>
            <person name="Chaturverdi K."/>
            <person name="Christophides G.K."/>
            <person name="Chrystal M.A.M."/>
            <person name="Clamp M."/>
            <person name="Cravchik A."/>
            <person name="Curwen V."/>
            <person name="Dana A."/>
            <person name="Delcher A."/>
            <person name="Dew I."/>
            <person name="Evans C.A."/>
            <person name="Flanigan M."/>
            <person name="Grundschober-Freimoser A."/>
            <person name="Friedli L."/>
            <person name="Gu Z."/>
            <person name="Guan P."/>
            <person name="Guigo R."/>
            <person name="Hillenmeyer M.E."/>
            <person name="Hladun S.L."/>
            <person name="Hogan J.R."/>
            <person name="Hong Y.S."/>
            <person name="Hoover J."/>
            <person name="Jaillon O."/>
            <person name="Ke Z."/>
            <person name="Kodira C.D."/>
            <person name="Kokoza E."/>
            <person name="Koutsos A."/>
            <person name="Letunic I."/>
            <person name="Levitsky A.A."/>
            <person name="Liang Y."/>
            <person name="Lin J.-J."/>
            <person name="Lobo N.F."/>
            <person name="Lopez J.R."/>
            <person name="Malek J.A."/>
            <person name="McIntosh T.C."/>
            <person name="Meister S."/>
            <person name="Miller J.R."/>
            <person name="Mobarry C."/>
            <person name="Mongin E."/>
            <person name="Murphy S.D."/>
            <person name="O'Brochta D.A."/>
            <person name="Pfannkoch C."/>
            <person name="Qi R."/>
            <person name="Regier M.A."/>
            <person name="Remington K."/>
            <person name="Shao H."/>
            <person name="Sharakhova M.V."/>
            <person name="Sitter C.D."/>
            <person name="Shetty J."/>
            <person name="Smith T.J."/>
            <person name="Strong R."/>
            <person name="Sun J."/>
            <person name="Thomasova D."/>
            <person name="Ton L.Q."/>
            <person name="Topalis P."/>
            <person name="Tu Z.J."/>
            <person name="Unger M.F."/>
            <person name="Walenz B."/>
            <person name="Wang A.H."/>
            <person name="Wang J."/>
            <person name="Wang M."/>
            <person name="Wang X."/>
            <person name="Woodford K.J."/>
            <person name="Wortman J.R."/>
            <person name="Wu M."/>
            <person name="Yao A."/>
            <person name="Zdobnov E.M."/>
            <person name="Zhang H."/>
            <person name="Zhao Q."/>
            <person name="Zhao S."/>
            <person name="Zhu S.C."/>
            <person name="Zhimulev I."/>
            <person name="Coluzzi M."/>
            <person name="della Torre A."/>
            <person name="Roth C.W."/>
            <person name="Louis C."/>
            <person name="Kalush F."/>
            <person name="Mural R.J."/>
            <person name="Myers E.W."/>
            <person name="Adams M.D."/>
            <person name="Smith H.O."/>
            <person name="Broder S."/>
            <person name="Gardner M.J."/>
            <person name="Fraser C.M."/>
            <person name="Birney E."/>
            <person name="Bork P."/>
            <person name="Brey P.T."/>
            <person name="Venter J.C."/>
            <person name="Weissenbach J."/>
            <person name="Kafatos F.C."/>
            <person name="Collins F.H."/>
            <person name="Hoffman S.L."/>
        </authorList>
    </citation>
    <scope>NUCLEOTIDE SEQUENCE [LARGE SCALE GENOMIC DNA]</scope>
    <source>
        <strain>PEST</strain>
    </source>
</reference>
<name>MOCOS_ANOGA</name>
<organism>
    <name type="scientific">Anopheles gambiae</name>
    <name type="common">African malaria mosquito</name>
    <dbReference type="NCBI Taxonomy" id="7165"/>
    <lineage>
        <taxon>Eukaryota</taxon>
        <taxon>Metazoa</taxon>
        <taxon>Ecdysozoa</taxon>
        <taxon>Arthropoda</taxon>
        <taxon>Hexapoda</taxon>
        <taxon>Insecta</taxon>
        <taxon>Pterygota</taxon>
        <taxon>Neoptera</taxon>
        <taxon>Endopterygota</taxon>
        <taxon>Diptera</taxon>
        <taxon>Nematocera</taxon>
        <taxon>Culicoidea</taxon>
        <taxon>Culicidae</taxon>
        <taxon>Anophelinae</taxon>
        <taxon>Anopheles</taxon>
    </lineage>
</organism>
<proteinExistence type="inferred from homology"/>
<keyword id="KW-0501">Molybdenum cofactor biosynthesis</keyword>
<keyword id="KW-0663">Pyridoxal phosphate</keyword>
<keyword id="KW-1185">Reference proteome</keyword>
<keyword id="KW-0808">Transferase</keyword>
<gene>
    <name evidence="1" type="primary">mal</name>
    <name type="ORF">AGAP000555</name>
</gene>
<sequence length="770" mass="85736">MDFVEEFTDEERLKIEQDFSRLADKCYLDHAGTALYGESQLRAVQELLAGGLYCNPHTSRTMEDLIDLVRYRVLRWFQTRPADYSLVFTSGTTASLKLVAESFEFGPGDAEPGSFVYLRDSHTSVLGMRELVRTGRVQPIERAELLQALNEPEDPRRQHPHRPSLLVFPAQCNFNGAKYPLELCELIERNGLRGYGGDAFHVCLDAASHVSTSPLDLSRYRPSFVCLSFYKIFGYPTGLGALLVRRDAEPLLRGKRYYGGGTVKIALSGPDRFHERRDALPDRLEDGTINFLSIAALLPCLETLTRLIPGPTMDRIQRHTFQLARHCYRELQALQHANGGRVVDLYHDTAFGDARTQGAIVNFNVLNDDGGHVGFAEVACMAANHGIYLRTGCFCNPGACQRHLRLADDDLLRHYRAGHVCGDANDLIDGQPTGSVRVSFGYCTRRSDVDRLVAMVRRCYVRRSLTGPLSRADVLAQYKSYDRPRLVQLCLYPVKSCGPLRVTTGGWPLAPTGLLYDRAFLIVDEHGAAMTQKKLPTMCRIRPDIADGRLVLRHADLEDEPLTIGLEGGGEAGEPAAAHLCQTKVCRDSVQGVDCGERAADWVSRALGVSGLRLLRQSGQEPRRQRQTDRALSLNNQAQLLLINRTSVRWLRDKVGDGDWDGADAPSLDALVDRFRGNLIVETVRPLEESDWRQVLIGPSQFTVDGPCTRCQMICIDQATGERTAEPLRTISREFGGRMRFGVYLSLAGDWADRELPLGATVSGVIEESE</sequence>
<accession>Q7QFL7</accession>
<feature type="chain" id="PRO_0000369367" description="Molybdenum cofactor sulfurase">
    <location>
        <begin position="1"/>
        <end position="770"/>
    </location>
</feature>
<feature type="domain" description="MOSC" evidence="1">
    <location>
        <begin position="601"/>
        <end position="770"/>
    </location>
</feature>
<feature type="active site" evidence="1">
    <location>
        <position position="395"/>
    </location>
</feature>
<feature type="modified residue" description="N6-(pyridoxal phosphate)lysine" evidence="1">
    <location>
        <position position="231"/>
    </location>
</feature>
<comment type="function">
    <text evidence="1">Sulfurates the molybdenum cofactor. Sulfation of molybdenum is essential for xanthine dehydrogenase (XDH) and aldehyde oxidase (ADO) enzymes in which molybdenum cofactor is liganded by 1 oxygen and 1 sulfur atom in active form.</text>
</comment>
<comment type="catalytic activity">
    <reaction evidence="1">
        <text>Mo-molybdopterin + L-cysteine + AH2 = thio-Mo-molybdopterin + L-alanine + A + H2O</text>
        <dbReference type="Rhea" id="RHEA:42636"/>
        <dbReference type="ChEBI" id="CHEBI:13193"/>
        <dbReference type="ChEBI" id="CHEBI:15377"/>
        <dbReference type="ChEBI" id="CHEBI:17499"/>
        <dbReference type="ChEBI" id="CHEBI:35235"/>
        <dbReference type="ChEBI" id="CHEBI:57972"/>
        <dbReference type="ChEBI" id="CHEBI:71302"/>
        <dbReference type="ChEBI" id="CHEBI:82685"/>
        <dbReference type="EC" id="2.8.1.9"/>
    </reaction>
</comment>
<comment type="cofactor">
    <cofactor evidence="1">
        <name>pyridoxal 5'-phosphate</name>
        <dbReference type="ChEBI" id="CHEBI:597326"/>
    </cofactor>
</comment>
<comment type="similarity">
    <text evidence="1">Belongs to the class-V pyridoxal-phosphate-dependent aminotransferase family. MOCOS subfamily.</text>
</comment>
<evidence type="ECO:0000255" key="1">
    <source>
        <dbReference type="HAMAP-Rule" id="MF_03050"/>
    </source>
</evidence>
<protein>
    <recommendedName>
        <fullName evidence="1">Molybdenum cofactor sulfurase</fullName>
        <shortName evidence="1">MCS</shortName>
        <shortName evidence="1">MOS</shortName>
        <shortName evidence="1">MoCo sulfurase</shortName>
        <ecNumber evidence="1">2.8.1.9</ecNumber>
    </recommendedName>
    <alternativeName>
        <fullName evidence="1">Molybdenum cofactor sulfurtransferase</fullName>
    </alternativeName>
    <alternativeName>
        <fullName evidence="1">Protein maroon-like</fullName>
        <shortName evidence="1">Ma-l</shortName>
    </alternativeName>
</protein>